<accession>O13472</accession>
<reference key="1">
    <citation type="journal article" date="1998" name="Yeast">
        <title>Identification and analysis of homologues of Saccharomyces cerevisiae Spt3 suggest conserved functional domains.</title>
        <authorList>
            <person name="Madison J.M."/>
            <person name="Winston F."/>
        </authorList>
    </citation>
    <scope>NUCLEOTIDE SEQUENCE [GENOMIC DNA]</scope>
    <scope>FUNCTION</scope>
    <scope>SUBCELLULAR LOCATION</scope>
</reference>
<reference key="2">
    <citation type="journal article" date="2004" name="Nature">
        <title>Genome evolution in yeasts.</title>
        <authorList>
            <person name="Dujon B."/>
            <person name="Sherman D."/>
            <person name="Fischer G."/>
            <person name="Durrens P."/>
            <person name="Casaregola S."/>
            <person name="Lafontaine I."/>
            <person name="de Montigny J."/>
            <person name="Marck C."/>
            <person name="Neuveglise C."/>
            <person name="Talla E."/>
            <person name="Goffard N."/>
            <person name="Frangeul L."/>
            <person name="Aigle M."/>
            <person name="Anthouard V."/>
            <person name="Babour A."/>
            <person name="Barbe V."/>
            <person name="Barnay S."/>
            <person name="Blanchin S."/>
            <person name="Beckerich J.-M."/>
            <person name="Beyne E."/>
            <person name="Bleykasten C."/>
            <person name="Boisrame A."/>
            <person name="Boyer J."/>
            <person name="Cattolico L."/>
            <person name="Confanioleri F."/>
            <person name="de Daruvar A."/>
            <person name="Despons L."/>
            <person name="Fabre E."/>
            <person name="Fairhead C."/>
            <person name="Ferry-Dumazet H."/>
            <person name="Groppi A."/>
            <person name="Hantraye F."/>
            <person name="Hennequin C."/>
            <person name="Jauniaux N."/>
            <person name="Joyet P."/>
            <person name="Kachouri R."/>
            <person name="Kerrest A."/>
            <person name="Koszul R."/>
            <person name="Lemaire M."/>
            <person name="Lesur I."/>
            <person name="Ma L."/>
            <person name="Muller H."/>
            <person name="Nicaud J.-M."/>
            <person name="Nikolski M."/>
            <person name="Oztas S."/>
            <person name="Ozier-Kalogeropoulos O."/>
            <person name="Pellenz S."/>
            <person name="Potier S."/>
            <person name="Richard G.-F."/>
            <person name="Straub M.-L."/>
            <person name="Suleau A."/>
            <person name="Swennen D."/>
            <person name="Tekaia F."/>
            <person name="Wesolowski-Louvel M."/>
            <person name="Westhof E."/>
            <person name="Wirth B."/>
            <person name="Zeniou-Meyer M."/>
            <person name="Zivanovic Y."/>
            <person name="Bolotin-Fukuhara M."/>
            <person name="Thierry A."/>
            <person name="Bouchier C."/>
            <person name="Caudron B."/>
            <person name="Scarpelli C."/>
            <person name="Gaillardin C."/>
            <person name="Weissenbach J."/>
            <person name="Wincker P."/>
            <person name="Souciet J.-L."/>
        </authorList>
    </citation>
    <scope>NUCLEOTIDE SEQUENCE [LARGE SCALE GENOMIC DNA]</scope>
    <source>
        <strain>ATCC 8585 / CBS 2359 / DSM 70799 / NBRC 1267 / NRRL Y-1140 / WM37</strain>
    </source>
</reference>
<comment type="function">
    <text evidence="2">SPT factors 3, 7 and 8 are required for the initiation of Ty transcription from the delta promoter. SPT3 regulates Ty1 as well as the mating factor genes. Interacts directly with TATA-binding protein. It is likely to be required for normal TBP function at a subset of RNA polymerase II-dependent promoters.</text>
</comment>
<comment type="subcellular location">
    <subcellularLocation>
        <location evidence="2">Nucleus</location>
    </subcellularLocation>
</comment>
<comment type="similarity">
    <text evidence="3">Belongs to the SPT3 family.</text>
</comment>
<dbReference type="EMBL" id="AF005930">
    <property type="protein sequence ID" value="AAC49994.1"/>
    <property type="molecule type" value="Genomic_DNA"/>
</dbReference>
<dbReference type="EMBL" id="CR382125">
    <property type="protein sequence ID" value="CAG99180.1"/>
    <property type="molecule type" value="Genomic_DNA"/>
</dbReference>
<dbReference type="RefSeq" id="XP_454093.1">
    <property type="nucleotide sequence ID" value="XM_454093.1"/>
</dbReference>
<dbReference type="SMR" id="O13472"/>
<dbReference type="FunCoup" id="O13472">
    <property type="interactions" value="1238"/>
</dbReference>
<dbReference type="STRING" id="284590.O13472"/>
<dbReference type="PaxDb" id="284590-O13472"/>
<dbReference type="KEGG" id="kla:KLLA0_E03279g"/>
<dbReference type="eggNOG" id="KOG3902">
    <property type="taxonomic scope" value="Eukaryota"/>
</dbReference>
<dbReference type="HOGENOM" id="CLU_038706_1_1_1"/>
<dbReference type="InParanoid" id="O13472"/>
<dbReference type="OMA" id="QFMFNEQ"/>
<dbReference type="Proteomes" id="UP000000598">
    <property type="component" value="Chromosome E"/>
</dbReference>
<dbReference type="GO" id="GO:0005634">
    <property type="term" value="C:nucleus"/>
    <property type="evidence" value="ECO:0007669"/>
    <property type="project" value="UniProtKB-SubCell"/>
</dbReference>
<dbReference type="GO" id="GO:0000124">
    <property type="term" value="C:SAGA complex"/>
    <property type="evidence" value="ECO:0007669"/>
    <property type="project" value="TreeGrafter"/>
</dbReference>
<dbReference type="GO" id="GO:0003677">
    <property type="term" value="F:DNA binding"/>
    <property type="evidence" value="ECO:0007669"/>
    <property type="project" value="UniProtKB-KW"/>
</dbReference>
<dbReference type="GO" id="GO:0046982">
    <property type="term" value="F:protein heterodimerization activity"/>
    <property type="evidence" value="ECO:0007669"/>
    <property type="project" value="InterPro"/>
</dbReference>
<dbReference type="GO" id="GO:0003712">
    <property type="term" value="F:transcription coregulator activity"/>
    <property type="evidence" value="ECO:0007669"/>
    <property type="project" value="TreeGrafter"/>
</dbReference>
<dbReference type="GO" id="GO:0006366">
    <property type="term" value="P:transcription by RNA polymerase II"/>
    <property type="evidence" value="ECO:0007669"/>
    <property type="project" value="InterPro"/>
</dbReference>
<dbReference type="CDD" id="cd22926">
    <property type="entry name" value="HFD_SPT3"/>
    <property type="match status" value="1"/>
</dbReference>
<dbReference type="FunFam" id="1.10.20.10:FF:000023">
    <property type="entry name" value="transcription initiation protein SPT3 homolog"/>
    <property type="match status" value="1"/>
</dbReference>
<dbReference type="Gene3D" id="1.10.20.10">
    <property type="entry name" value="Histone, subunit A"/>
    <property type="match status" value="1"/>
</dbReference>
<dbReference type="InterPro" id="IPR009072">
    <property type="entry name" value="Histone-fold"/>
</dbReference>
<dbReference type="InterPro" id="IPR003195">
    <property type="entry name" value="TFIID_TAF13"/>
</dbReference>
<dbReference type="PANTHER" id="PTHR11380">
    <property type="entry name" value="TRANSCRIPTION INITIATION FACTOR TFIID/SUPT3-RELATED"/>
    <property type="match status" value="1"/>
</dbReference>
<dbReference type="PANTHER" id="PTHR11380:SF16">
    <property type="entry name" value="TRANSCRIPTION INITIATION PROTEIN SPT3 HOMOLOG"/>
    <property type="match status" value="1"/>
</dbReference>
<dbReference type="Pfam" id="PF02269">
    <property type="entry name" value="TFIID-18kDa"/>
    <property type="match status" value="1"/>
</dbReference>
<dbReference type="SUPFAM" id="SSF47113">
    <property type="entry name" value="Histone-fold"/>
    <property type="match status" value="2"/>
</dbReference>
<name>SPT3_KLULA</name>
<evidence type="ECO:0000256" key="1">
    <source>
        <dbReference type="SAM" id="MobiDB-lite"/>
    </source>
</evidence>
<evidence type="ECO:0000269" key="2">
    <source>
    </source>
</evidence>
<evidence type="ECO:0000305" key="3"/>
<sequence>MSDKYKYRVEIQQMMFVSGENNEPPVETTSLIEDIVRGQVVEILLQATRTANCRGSKSIVPEDVIFLIRHDKAKVNRLRTYLSWKDLRKNAKDQDAQQAAAGGGAGDGSGPGGIDDDDAGKKDKDGAGVNMKVKKSSIKLPWELQFMFNEQPLENPDEDDMDDDEREANMATLKRLKMADDRTRGMTKEEYVHWSDCRQASFTFRKSKRFKDWSGISQLIDSKPHDDVIDILGFLTFEIVCAITETALKIKTRYERIRSMKTQSQPQEYSVGTTRRKKRLFDGPDNVVNPLKPEHIEEAWRVLQTVNMKHRALSNYKGGRLSSRTVIM</sequence>
<gene>
    <name type="primary">SPT3</name>
    <name type="ordered locus">KLLA0E03212g</name>
</gene>
<organism>
    <name type="scientific">Kluyveromyces lactis (strain ATCC 8585 / CBS 2359 / DSM 70799 / NBRC 1267 / NRRL Y-1140 / WM37)</name>
    <name type="common">Yeast</name>
    <name type="synonym">Candida sphaerica</name>
    <dbReference type="NCBI Taxonomy" id="284590"/>
    <lineage>
        <taxon>Eukaryota</taxon>
        <taxon>Fungi</taxon>
        <taxon>Dikarya</taxon>
        <taxon>Ascomycota</taxon>
        <taxon>Saccharomycotina</taxon>
        <taxon>Saccharomycetes</taxon>
        <taxon>Saccharomycetales</taxon>
        <taxon>Saccharomycetaceae</taxon>
        <taxon>Kluyveromyces</taxon>
    </lineage>
</organism>
<feature type="chain" id="PRO_0000072164" description="Protein SPT3">
    <location>
        <begin position="1"/>
        <end position="328"/>
    </location>
</feature>
<feature type="region of interest" description="Disordered" evidence="1">
    <location>
        <begin position="93"/>
        <end position="128"/>
    </location>
</feature>
<feature type="compositionally biased region" description="Gly residues" evidence="1">
    <location>
        <begin position="101"/>
        <end position="113"/>
    </location>
</feature>
<proteinExistence type="inferred from homology"/>
<keyword id="KW-0010">Activator</keyword>
<keyword id="KW-0238">DNA-binding</keyword>
<keyword id="KW-0539">Nucleus</keyword>
<keyword id="KW-1185">Reference proteome</keyword>
<keyword id="KW-0804">Transcription</keyword>
<keyword id="KW-0805">Transcription regulation</keyword>
<protein>
    <recommendedName>
        <fullName>Protein SPT3</fullName>
    </recommendedName>
</protein>